<sequence length="161" mass="18667">MRNASKKHLDLPYRPGVGMMILNADNHIFVGKRIDTKISAWQMPQGGIVPGETPSIAAMREMLEEIGSDKGYIIAESKCWYSYDLPSFLIPKLWNGNFRGQKQRWFLIRFTGNNEDININTSNPEFDQWRWASLNELLSIIIPFKRKLYQAVVKEFDSLIQ</sequence>
<accession>A8EXY5</accession>
<proteinExistence type="inferred from homology"/>
<comment type="function">
    <text evidence="1">Accelerates the degradation of transcripts by removing pyrophosphate from the 5'-end of triphosphorylated RNA, leading to a more labile monophosphorylated state that can stimulate subsequent ribonuclease cleavage.</text>
</comment>
<comment type="cofactor">
    <cofactor evidence="1">
        <name>a divalent metal cation</name>
        <dbReference type="ChEBI" id="CHEBI:60240"/>
    </cofactor>
</comment>
<comment type="similarity">
    <text evidence="1">Belongs to the Nudix hydrolase family. RppH subfamily.</text>
</comment>
<feature type="chain" id="PRO_1000021988" description="RNA pyrophosphohydrolase">
    <location>
        <begin position="1"/>
        <end position="161"/>
    </location>
</feature>
<feature type="domain" description="Nudix hydrolase" evidence="1">
    <location>
        <begin position="12"/>
        <end position="154"/>
    </location>
</feature>
<feature type="short sequence motif" description="Nudix box">
    <location>
        <begin position="46"/>
        <end position="67"/>
    </location>
</feature>
<keyword id="KW-0378">Hydrolase</keyword>
<dbReference type="EC" id="3.6.1.-" evidence="1"/>
<dbReference type="EMBL" id="CP000409">
    <property type="protein sequence ID" value="ABV73218.1"/>
    <property type="molecule type" value="Genomic_DNA"/>
</dbReference>
<dbReference type="RefSeq" id="WP_012148417.1">
    <property type="nucleotide sequence ID" value="NC_009879.1"/>
</dbReference>
<dbReference type="SMR" id="A8EXY5"/>
<dbReference type="STRING" id="293613.A1E_01365"/>
<dbReference type="KEGG" id="rcm:A1E_01365"/>
<dbReference type="eggNOG" id="COG0494">
    <property type="taxonomic scope" value="Bacteria"/>
</dbReference>
<dbReference type="HOGENOM" id="CLU_087195_3_0_5"/>
<dbReference type="Proteomes" id="UP000007056">
    <property type="component" value="Chromosome"/>
</dbReference>
<dbReference type="GO" id="GO:0005737">
    <property type="term" value="C:cytoplasm"/>
    <property type="evidence" value="ECO:0007669"/>
    <property type="project" value="TreeGrafter"/>
</dbReference>
<dbReference type="GO" id="GO:0034353">
    <property type="term" value="F:mRNA 5'-diphosphatase activity"/>
    <property type="evidence" value="ECO:0007669"/>
    <property type="project" value="TreeGrafter"/>
</dbReference>
<dbReference type="GO" id="GO:0006402">
    <property type="term" value="P:mRNA catabolic process"/>
    <property type="evidence" value="ECO:0007669"/>
    <property type="project" value="TreeGrafter"/>
</dbReference>
<dbReference type="CDD" id="cd03671">
    <property type="entry name" value="NUDIX_Ap4A_hydrolase_plant_like"/>
    <property type="match status" value="1"/>
</dbReference>
<dbReference type="Gene3D" id="3.90.79.10">
    <property type="entry name" value="Nucleoside Triphosphate Pyrophosphohydrolase"/>
    <property type="match status" value="1"/>
</dbReference>
<dbReference type="HAMAP" id="MF_00298">
    <property type="entry name" value="Nudix_RppH"/>
    <property type="match status" value="1"/>
</dbReference>
<dbReference type="InterPro" id="IPR015797">
    <property type="entry name" value="NUDIX_hydrolase-like_dom_sf"/>
</dbReference>
<dbReference type="InterPro" id="IPR020084">
    <property type="entry name" value="NUDIX_hydrolase_CS"/>
</dbReference>
<dbReference type="InterPro" id="IPR000086">
    <property type="entry name" value="NUDIX_hydrolase_dom"/>
</dbReference>
<dbReference type="InterPro" id="IPR022927">
    <property type="entry name" value="RppH"/>
</dbReference>
<dbReference type="NCBIfam" id="NF001936">
    <property type="entry name" value="PRK00714.1-3"/>
    <property type="match status" value="1"/>
</dbReference>
<dbReference type="NCBIfam" id="NF001938">
    <property type="entry name" value="PRK00714.1-5"/>
    <property type="match status" value="1"/>
</dbReference>
<dbReference type="PANTHER" id="PTHR23114">
    <property type="entry name" value="M7GPPPN-MRNA HYDROLASE"/>
    <property type="match status" value="1"/>
</dbReference>
<dbReference type="PANTHER" id="PTHR23114:SF17">
    <property type="entry name" value="M7GPPPN-MRNA HYDROLASE"/>
    <property type="match status" value="1"/>
</dbReference>
<dbReference type="Pfam" id="PF00293">
    <property type="entry name" value="NUDIX"/>
    <property type="match status" value="1"/>
</dbReference>
<dbReference type="SUPFAM" id="SSF55811">
    <property type="entry name" value="Nudix"/>
    <property type="match status" value="1"/>
</dbReference>
<dbReference type="PROSITE" id="PS51462">
    <property type="entry name" value="NUDIX"/>
    <property type="match status" value="1"/>
</dbReference>
<dbReference type="PROSITE" id="PS00893">
    <property type="entry name" value="NUDIX_BOX"/>
    <property type="match status" value="1"/>
</dbReference>
<organism>
    <name type="scientific">Rickettsia canadensis (strain McKiel)</name>
    <dbReference type="NCBI Taxonomy" id="293613"/>
    <lineage>
        <taxon>Bacteria</taxon>
        <taxon>Pseudomonadati</taxon>
        <taxon>Pseudomonadota</taxon>
        <taxon>Alphaproteobacteria</taxon>
        <taxon>Rickettsiales</taxon>
        <taxon>Rickettsiaceae</taxon>
        <taxon>Rickettsieae</taxon>
        <taxon>Rickettsia</taxon>
        <taxon>belli group</taxon>
    </lineage>
</organism>
<reference key="1">
    <citation type="submission" date="2007-09" db="EMBL/GenBank/DDBJ databases">
        <title>Complete genome sequence of Rickettsia canadensis.</title>
        <authorList>
            <person name="Madan A."/>
            <person name="Fahey J."/>
            <person name="Helton E."/>
            <person name="Ketteman M."/>
            <person name="Madan A."/>
            <person name="Rodrigues S."/>
            <person name="Sanchez A."/>
            <person name="Whiting M."/>
            <person name="Dasch G."/>
            <person name="Eremeeva M."/>
        </authorList>
    </citation>
    <scope>NUCLEOTIDE SEQUENCE [LARGE SCALE GENOMIC DNA]</scope>
    <source>
        <strain>McKiel</strain>
    </source>
</reference>
<name>RPPH_RICCK</name>
<protein>
    <recommendedName>
        <fullName evidence="1">RNA pyrophosphohydrolase</fullName>
        <ecNumber evidence="1">3.6.1.-</ecNumber>
    </recommendedName>
    <alternativeName>
        <fullName evidence="1">(Di)nucleoside polyphosphate hydrolase</fullName>
    </alternativeName>
</protein>
<gene>
    <name evidence="1" type="primary">rppH</name>
    <name evidence="1" type="synonym">nudH</name>
    <name type="ordered locus">A1E_01365</name>
</gene>
<evidence type="ECO:0000255" key="1">
    <source>
        <dbReference type="HAMAP-Rule" id="MF_00298"/>
    </source>
</evidence>